<feature type="chain" id="PRO_0000360310" description="NAD(P)H-quinone oxidoreductase subunit 4L, chloroplastic">
    <location>
        <begin position="1"/>
        <end position="101"/>
    </location>
</feature>
<feature type="transmembrane region" description="Helical" evidence="1">
    <location>
        <begin position="2"/>
        <end position="22"/>
    </location>
</feature>
<feature type="transmembrane region" description="Helical" evidence="1">
    <location>
        <begin position="32"/>
        <end position="52"/>
    </location>
</feature>
<feature type="transmembrane region" description="Helical" evidence="1">
    <location>
        <begin position="61"/>
        <end position="81"/>
    </location>
</feature>
<geneLocation type="chloroplast"/>
<accession>Q7YJT2</accession>
<protein>
    <recommendedName>
        <fullName evidence="1">NAD(P)H-quinone oxidoreductase subunit 4L, chloroplastic</fullName>
        <ecNumber evidence="1">7.1.1.-</ecNumber>
    </recommendedName>
    <alternativeName>
        <fullName evidence="1">NAD(P)H dehydrogenase subunit 4L</fullName>
    </alternativeName>
    <alternativeName>
        <fullName evidence="1">NADH-plastoquinone oxidoreductase subunit 4L</fullName>
    </alternativeName>
</protein>
<dbReference type="EC" id="7.1.1.-" evidence="1"/>
<dbReference type="EMBL" id="AJ428413">
    <property type="protein sequence ID" value="CAD28774.1"/>
    <property type="molecule type" value="Genomic_DNA"/>
</dbReference>
<dbReference type="RefSeq" id="NP_862807.1">
    <property type="nucleotide sequence ID" value="NC_004993.1"/>
</dbReference>
<dbReference type="SMR" id="Q7YJT2"/>
<dbReference type="GeneID" id="2597989"/>
<dbReference type="GO" id="GO:0009535">
    <property type="term" value="C:chloroplast thylakoid membrane"/>
    <property type="evidence" value="ECO:0007669"/>
    <property type="project" value="UniProtKB-SubCell"/>
</dbReference>
<dbReference type="GO" id="GO:0030964">
    <property type="term" value="C:NADH dehydrogenase complex"/>
    <property type="evidence" value="ECO:0007669"/>
    <property type="project" value="TreeGrafter"/>
</dbReference>
<dbReference type="GO" id="GO:0016655">
    <property type="term" value="F:oxidoreductase activity, acting on NAD(P)H, quinone or similar compound as acceptor"/>
    <property type="evidence" value="ECO:0007669"/>
    <property type="project" value="UniProtKB-UniRule"/>
</dbReference>
<dbReference type="GO" id="GO:0048038">
    <property type="term" value="F:quinone binding"/>
    <property type="evidence" value="ECO:0007669"/>
    <property type="project" value="UniProtKB-KW"/>
</dbReference>
<dbReference type="GO" id="GO:0042773">
    <property type="term" value="P:ATP synthesis coupled electron transport"/>
    <property type="evidence" value="ECO:0007669"/>
    <property type="project" value="InterPro"/>
</dbReference>
<dbReference type="GO" id="GO:0019684">
    <property type="term" value="P:photosynthesis, light reaction"/>
    <property type="evidence" value="ECO:0007669"/>
    <property type="project" value="UniProtKB-UniRule"/>
</dbReference>
<dbReference type="FunFam" id="1.10.287.3510:FF:000001">
    <property type="entry name" value="NADH-quinone oxidoreductase subunit K"/>
    <property type="match status" value="1"/>
</dbReference>
<dbReference type="Gene3D" id="1.10.287.3510">
    <property type="match status" value="1"/>
</dbReference>
<dbReference type="HAMAP" id="MF_01456">
    <property type="entry name" value="NDH1_NuoK"/>
    <property type="match status" value="1"/>
</dbReference>
<dbReference type="InterPro" id="IPR001133">
    <property type="entry name" value="NADH_UbQ_OxRdtase_chain4L/K"/>
</dbReference>
<dbReference type="InterPro" id="IPR039428">
    <property type="entry name" value="NUOK/Mnh_C1-like"/>
</dbReference>
<dbReference type="NCBIfam" id="NF004320">
    <property type="entry name" value="PRK05715.1-2"/>
    <property type="match status" value="1"/>
</dbReference>
<dbReference type="PANTHER" id="PTHR11434:SF16">
    <property type="entry name" value="NADH-UBIQUINONE OXIDOREDUCTASE CHAIN 4L"/>
    <property type="match status" value="1"/>
</dbReference>
<dbReference type="PANTHER" id="PTHR11434">
    <property type="entry name" value="NADH-UBIQUINONE OXIDOREDUCTASE SUBUNIT ND4L"/>
    <property type="match status" value="1"/>
</dbReference>
<dbReference type="Pfam" id="PF00420">
    <property type="entry name" value="Oxidored_q2"/>
    <property type="match status" value="1"/>
</dbReference>
<reference key="1">
    <citation type="journal article" date="2003" name="Plant Syst. Evol.">
        <title>The chloroplast genome of the 'basal' angiosperm Calycanthus fertilis -- structural and phylogenetic analyses.</title>
        <authorList>
            <person name="Goremykin V.V."/>
            <person name="Hirsch-Ernst K.I."/>
            <person name="Woelfl S."/>
            <person name="Hellwig F.H."/>
        </authorList>
    </citation>
    <scope>NUCLEOTIDE SEQUENCE [LARGE SCALE GENOMIC DNA]</scope>
</reference>
<name>NU4LC_CALFG</name>
<keyword id="KW-0150">Chloroplast</keyword>
<keyword id="KW-0472">Membrane</keyword>
<keyword id="KW-0520">NAD</keyword>
<keyword id="KW-0521">NADP</keyword>
<keyword id="KW-0934">Plastid</keyword>
<keyword id="KW-0618">Plastoquinone</keyword>
<keyword id="KW-0874">Quinone</keyword>
<keyword id="KW-0793">Thylakoid</keyword>
<keyword id="KW-1278">Translocase</keyword>
<keyword id="KW-0812">Transmembrane</keyword>
<keyword id="KW-1133">Transmembrane helix</keyword>
<keyword id="KW-0813">Transport</keyword>
<organism>
    <name type="scientific">Calycanthus floridus var. glaucus</name>
    <name type="common">Eastern sweetshrub</name>
    <name type="synonym">Calycanthus fertilis var. ferax</name>
    <dbReference type="NCBI Taxonomy" id="212734"/>
    <lineage>
        <taxon>Eukaryota</taxon>
        <taxon>Viridiplantae</taxon>
        <taxon>Streptophyta</taxon>
        <taxon>Embryophyta</taxon>
        <taxon>Tracheophyta</taxon>
        <taxon>Spermatophyta</taxon>
        <taxon>Magnoliopsida</taxon>
        <taxon>Magnoliidae</taxon>
        <taxon>Laurales</taxon>
        <taxon>Calycanthaceae</taxon>
        <taxon>Calycanthus</taxon>
    </lineage>
</organism>
<evidence type="ECO:0000255" key="1">
    <source>
        <dbReference type="HAMAP-Rule" id="MF_01456"/>
    </source>
</evidence>
<gene>
    <name evidence="1" type="primary">ndhE</name>
</gene>
<comment type="function">
    <text evidence="1">NDH shuttles electrons from NAD(P)H:plastoquinone, via FMN and iron-sulfur (Fe-S) centers, to quinones in the photosynthetic chain and possibly in a chloroplast respiratory chain. The immediate electron acceptor for the enzyme in this species is believed to be plastoquinone. Couples the redox reaction to proton translocation, and thus conserves the redox energy in a proton gradient.</text>
</comment>
<comment type="catalytic activity">
    <reaction evidence="1">
        <text>a plastoquinone + NADH + (n+1) H(+)(in) = a plastoquinol + NAD(+) + n H(+)(out)</text>
        <dbReference type="Rhea" id="RHEA:42608"/>
        <dbReference type="Rhea" id="RHEA-COMP:9561"/>
        <dbReference type="Rhea" id="RHEA-COMP:9562"/>
        <dbReference type="ChEBI" id="CHEBI:15378"/>
        <dbReference type="ChEBI" id="CHEBI:17757"/>
        <dbReference type="ChEBI" id="CHEBI:57540"/>
        <dbReference type="ChEBI" id="CHEBI:57945"/>
        <dbReference type="ChEBI" id="CHEBI:62192"/>
    </reaction>
</comment>
<comment type="catalytic activity">
    <reaction evidence="1">
        <text>a plastoquinone + NADPH + (n+1) H(+)(in) = a plastoquinol + NADP(+) + n H(+)(out)</text>
        <dbReference type="Rhea" id="RHEA:42612"/>
        <dbReference type="Rhea" id="RHEA-COMP:9561"/>
        <dbReference type="Rhea" id="RHEA-COMP:9562"/>
        <dbReference type="ChEBI" id="CHEBI:15378"/>
        <dbReference type="ChEBI" id="CHEBI:17757"/>
        <dbReference type="ChEBI" id="CHEBI:57783"/>
        <dbReference type="ChEBI" id="CHEBI:58349"/>
        <dbReference type="ChEBI" id="CHEBI:62192"/>
    </reaction>
</comment>
<comment type="subunit">
    <text evidence="1">NDH is composed of at least 16 different subunits, 5 of which are encoded in the nucleus.</text>
</comment>
<comment type="subcellular location">
    <subcellularLocation>
        <location evidence="1">Plastid</location>
        <location evidence="1">Chloroplast thylakoid membrane</location>
        <topology evidence="1">Multi-pass membrane protein</topology>
    </subcellularLocation>
</comment>
<comment type="similarity">
    <text evidence="1">Belongs to the complex I subunit 4L family.</text>
</comment>
<sequence>MMTEYVLILSAYLFSIGIYGLITSRNMVRALMCLELILNAVNMNLVTFSDLFDSRQLKGDIFSIFVIAIAAAEAAIGPAIVSSIHRNRKSTRINQSNLLNK</sequence>
<proteinExistence type="inferred from homology"/>